<proteinExistence type="evidence at transcript level"/>
<dbReference type="EMBL" id="BC123225">
    <property type="protein sequence ID" value="AAI23226.1"/>
    <property type="molecule type" value="mRNA"/>
</dbReference>
<dbReference type="RefSeq" id="NP_001090489.1">
    <property type="nucleotide sequence ID" value="NM_001097020.1"/>
</dbReference>
<dbReference type="SMR" id="Q05AW9"/>
<dbReference type="BioGRID" id="608109">
    <property type="interactions" value="1"/>
</dbReference>
<dbReference type="IntAct" id="Q05AW9">
    <property type="interactions" value="1"/>
</dbReference>
<dbReference type="DNASU" id="779402"/>
<dbReference type="GeneID" id="779402"/>
<dbReference type="KEGG" id="xla:779402"/>
<dbReference type="AGR" id="Xenbase:XB-GENE-990840"/>
<dbReference type="CTD" id="779402"/>
<dbReference type="Xenbase" id="XB-GENE-990840">
    <property type="gene designation" value="smg9.S"/>
</dbReference>
<dbReference type="OrthoDB" id="79514at2759"/>
<dbReference type="Proteomes" id="UP000186698">
    <property type="component" value="Chromosome 7S"/>
</dbReference>
<dbReference type="Bgee" id="779402">
    <property type="expression patterns" value="Expressed in ovary and 19 other cell types or tissues"/>
</dbReference>
<dbReference type="GO" id="GO:0000184">
    <property type="term" value="P:nuclear-transcribed mRNA catabolic process, nonsense-mediated decay"/>
    <property type="evidence" value="ECO:0000250"/>
    <property type="project" value="UniProtKB"/>
</dbReference>
<dbReference type="FunFam" id="3.40.50.300:FF:001272">
    <property type="entry name" value="SMG9 isoform 2"/>
    <property type="match status" value="1"/>
</dbReference>
<dbReference type="Gene3D" id="3.40.50.300">
    <property type="entry name" value="P-loop containing nucleotide triphosphate hydrolases"/>
    <property type="match status" value="1"/>
</dbReference>
<dbReference type="InterPro" id="IPR027417">
    <property type="entry name" value="P-loop_NTPase"/>
</dbReference>
<dbReference type="InterPro" id="IPR039177">
    <property type="entry name" value="SMG9"/>
</dbReference>
<dbReference type="PANTHER" id="PTHR14270">
    <property type="entry name" value="NONSENSE-MEDIATED MRNA DECAY FACTOR SMG9"/>
    <property type="match status" value="1"/>
</dbReference>
<dbReference type="PANTHER" id="PTHR14270:SF0">
    <property type="entry name" value="NONSENSE-MEDIATED MRNA DECAY FACTOR SMG9"/>
    <property type="match status" value="1"/>
</dbReference>
<dbReference type="SUPFAM" id="SSF52540">
    <property type="entry name" value="P-loop containing nucleoside triphosphate hydrolases"/>
    <property type="match status" value="1"/>
</dbReference>
<reference key="1">
    <citation type="submission" date="2006-09" db="EMBL/GenBank/DDBJ databases">
        <authorList>
            <consortium name="NIH - Xenopus Gene Collection (XGC) project"/>
        </authorList>
    </citation>
    <scope>NUCLEOTIDE SEQUENCE [LARGE SCALE MRNA]</scope>
    <source>
        <tissue>Embryo</tissue>
    </source>
</reference>
<name>SMG9_XENLA</name>
<sequence length="508" mass="56599">MSDSGHSQPNVFIPGRNRRRRWMDQGPAGNLNLSEPGREKDSVLRDRDQERWEGNDEGCGYTIQKTPIILAKPASDRAKAATPAAPAPIEKPIVLMKAREEGKPTAPAEGAAVPPAAAVAKVEKEGQRPTQPVYQIQNRGMGAAASAGGSVDPVVGQAKLLPPQKMKHSIKLVDEYMNWCDSAIEFLLDQTDVLVVGVLGLQGTGKSTLMSLLSANSPDDDQRSYVFRMQSQEVRERAGNQTSGIDFFISQERIIFLDTQPILSPAILDHLINNDRKLPPEYNLPHTYVEMQSLQIAAFLFTVCHVVIVVQDWFTDFNLYRFLQTAEMLKPSTPSPSHESSGSSGSDEGIEYYPHIVFVQNKSKREDFCPRTLKQMHTVMDKLMLHSHLRYKGTLSMLDCNIFPGLPYDFVESEVNLFLIPTMESDADETISRAGTSGIPLFSLLPAYKGHPSFHSLVSRLRSQIMSMSRPQLSHTILTEKNWFHYAARIWDGVKKSSALSEYSRLLG</sequence>
<feature type="chain" id="PRO_0000289166" description="Nonsense-mediated mRNA decay factor SMG9">
    <location>
        <begin position="1"/>
        <end position="508"/>
    </location>
</feature>
<feature type="region of interest" description="Disordered" evidence="3">
    <location>
        <begin position="1"/>
        <end position="59"/>
    </location>
</feature>
<feature type="compositionally biased region" description="Polar residues" evidence="3">
    <location>
        <begin position="1"/>
        <end position="10"/>
    </location>
</feature>
<feature type="compositionally biased region" description="Basic and acidic residues" evidence="3">
    <location>
        <begin position="36"/>
        <end position="54"/>
    </location>
</feature>
<keyword id="KW-0866">Nonsense-mediated mRNA decay</keyword>
<keyword id="KW-1185">Reference proteome</keyword>
<evidence type="ECO:0000250" key="1"/>
<evidence type="ECO:0000250" key="2">
    <source>
        <dbReference type="UniProtKB" id="Q9H0W8"/>
    </source>
</evidence>
<evidence type="ECO:0000256" key="3">
    <source>
        <dbReference type="SAM" id="MobiDB-lite"/>
    </source>
</evidence>
<evidence type="ECO:0000305" key="4"/>
<accession>Q05AW9</accession>
<comment type="function">
    <text evidence="1">Involved in nonsense-mediated decay (NMD) of mRNAs containing premature stop codons. Is recruited by release factors to stalled ribosomes together with smg1 and smg8 (forming the SMG1C protein kinase complex) and, in the SMG1C complex, is required for the efficient association between smg1 and smg8 (By similarity).</text>
</comment>
<comment type="subunit">
    <text evidence="1">Component of the SMG1C complex composed of smg1, smg8 and smg9.</text>
</comment>
<comment type="similarity">
    <text evidence="4">Belongs to the SMG9 family.</text>
</comment>
<protein>
    <recommendedName>
        <fullName evidence="2">Nonsense-mediated mRNA decay factor SMG9</fullName>
    </recommendedName>
    <alternativeName>
        <fullName>Protein smg-9 homolog</fullName>
    </alternativeName>
</protein>
<gene>
    <name type="primary">smg9</name>
</gene>
<organism>
    <name type="scientific">Xenopus laevis</name>
    <name type="common">African clawed frog</name>
    <dbReference type="NCBI Taxonomy" id="8355"/>
    <lineage>
        <taxon>Eukaryota</taxon>
        <taxon>Metazoa</taxon>
        <taxon>Chordata</taxon>
        <taxon>Craniata</taxon>
        <taxon>Vertebrata</taxon>
        <taxon>Euteleostomi</taxon>
        <taxon>Amphibia</taxon>
        <taxon>Batrachia</taxon>
        <taxon>Anura</taxon>
        <taxon>Pipoidea</taxon>
        <taxon>Pipidae</taxon>
        <taxon>Xenopodinae</taxon>
        <taxon>Xenopus</taxon>
        <taxon>Xenopus</taxon>
    </lineage>
</organism>